<comment type="function">
    <text evidence="3">Catalyzes the degradation of mimosine, which is a toxic secondary metabolite found in all Mimosa and Leucaena species (PubMed:31368041). Catalyzes the degradation of cystathionine, but seems to have lower preference toward cystathionine over mimosine (PubMed:31368041).</text>
</comment>
<comment type="catalytic activity">
    <reaction evidence="3">
        <text>L-mimosine + H2O = 3-hydroxy-4H-pyrid-4-one + pyruvate + NH4(+)</text>
        <dbReference type="Rhea" id="RHEA:75355"/>
        <dbReference type="ChEBI" id="CHEBI:15361"/>
        <dbReference type="ChEBI" id="CHEBI:15377"/>
        <dbReference type="ChEBI" id="CHEBI:28630"/>
        <dbReference type="ChEBI" id="CHEBI:28938"/>
        <dbReference type="ChEBI" id="CHEBI:77689"/>
        <dbReference type="EC" id="4.3.3.8"/>
    </reaction>
    <physiologicalReaction direction="left-to-right" evidence="6">
        <dbReference type="Rhea" id="RHEA:75356"/>
    </physiologicalReaction>
</comment>
<comment type="catalytic activity">
    <reaction evidence="3">
        <text>L,L-cystathionine + H2O = L-homocysteine + pyruvate + NH4(+)</text>
        <dbReference type="Rhea" id="RHEA:13965"/>
        <dbReference type="ChEBI" id="CHEBI:15361"/>
        <dbReference type="ChEBI" id="CHEBI:15377"/>
        <dbReference type="ChEBI" id="CHEBI:28938"/>
        <dbReference type="ChEBI" id="CHEBI:58161"/>
        <dbReference type="ChEBI" id="CHEBI:58199"/>
    </reaction>
    <physiologicalReaction direction="left-to-right" evidence="6">
        <dbReference type="Rhea" id="RHEA:13966"/>
    </physiologicalReaction>
</comment>
<comment type="catalytic activity">
    <reaction evidence="3">
        <text>an S-substituted L-cysteine + H2O = a thiol + pyruvate + NH4(+)</text>
        <dbReference type="Rhea" id="RHEA:18121"/>
        <dbReference type="ChEBI" id="CHEBI:15361"/>
        <dbReference type="ChEBI" id="CHEBI:15377"/>
        <dbReference type="ChEBI" id="CHEBI:28938"/>
        <dbReference type="ChEBI" id="CHEBI:29256"/>
        <dbReference type="ChEBI" id="CHEBI:58717"/>
        <dbReference type="EC" id="4.4.1.13"/>
    </reaction>
    <physiologicalReaction direction="left-to-right" evidence="6">
        <dbReference type="Rhea" id="RHEA:18122"/>
    </physiologicalReaction>
</comment>
<comment type="cofactor">
    <cofactor evidence="3">
        <name>pyridoxal 5'-phosphate</name>
        <dbReference type="ChEBI" id="CHEBI:597326"/>
    </cofactor>
</comment>
<comment type="biophysicochemical properties">
    <kinetics>
        <KM evidence="3">1.95 mM for L-mimosine</KM>
        <KM evidence="3">0.05 mM for L,L-cystathionine</KM>
        <text evidence="3">kcat is 12180 sec(-1) with L-mimosine as substrate (PubMed:31368041). kcat is 310 sec(-1) with L,L-cystathionine as substrate (PubMed:31368041).</text>
    </kinetics>
    <phDependence>
        <text evidence="3">Optimum pH is 8.5-9.0.</text>
    </phDependence>
    <temperatureDependence>
        <text evidence="3">Optimum temperature is 50 degrees Celsius.</text>
    </temperatureDependence>
</comment>
<comment type="subunit">
    <text evidence="1">Forms homodimers. May form homotetramers from two homodimers.</text>
</comment>
<comment type="subcellular location">
    <subcellularLocation>
        <location evidence="2">Plastid</location>
        <location evidence="2">Chloroplast</location>
    </subcellularLocation>
</comment>
<comment type="similarity">
    <text evidence="5">Belongs to the trans-sulfuration enzymes family.</text>
</comment>
<protein>
    <recommendedName>
        <fullName evidence="4">Mimosinase, chloroplastic</fullName>
        <ecNumber evidence="3">4.3.3.8</ecNumber>
    </recommendedName>
    <alternativeName>
        <fullName evidence="4">Cystathionine beta-lyase</fullName>
        <ecNumber evidence="3">4.4.1.13</ecNumber>
    </alternativeName>
    <alternativeName>
        <fullName evidence="5">Cysteine-S-conjugate beta-lyase</fullName>
    </alternativeName>
</protein>
<reference key="1">
    <citation type="journal article" date="2019" name="J. Plant Res.">
        <title>Molecular characterization of mimosinase and cystathionine beta-lyase in the Mimosoideae subfamily member Mimosa pudica.</title>
        <authorList>
            <person name="Oogai S."/>
            <person name="Fukuta M."/>
            <person name="Watanabe K."/>
            <person name="Inafuku M."/>
            <person name="Oku H."/>
        </authorList>
    </citation>
    <scope>NUCLEOTIDE SEQUENCE [MRNA]</scope>
    <scope>FUNCTION</scope>
    <scope>CATALYTIC ACTIVITY</scope>
    <scope>COFACTOR</scope>
    <scope>BIOPHYSICOCHEMICAL PROPERTIES</scope>
    <scope>MUTAGENESIS OF PHE-98; TYR-102; ASN-162; CYS-263; LYS-284; CYS-288 AND SER-295</scope>
</reference>
<evidence type="ECO:0000250" key="1">
    <source>
        <dbReference type="UniProtKB" id="P53780"/>
    </source>
</evidence>
<evidence type="ECO:0000255" key="2"/>
<evidence type="ECO:0000269" key="3">
    <source>
    </source>
</evidence>
<evidence type="ECO:0000303" key="4">
    <source>
    </source>
</evidence>
<evidence type="ECO:0000305" key="5"/>
<evidence type="ECO:0000305" key="6">
    <source>
    </source>
</evidence>
<name>MIMOS_MIMPU</name>
<proteinExistence type="evidence at protein level"/>
<dbReference type="EC" id="4.3.3.8" evidence="3"/>
<dbReference type="EC" id="4.4.1.13" evidence="3"/>
<dbReference type="EMBL" id="AB823649">
    <property type="protein sequence ID" value="BAN57423.2"/>
    <property type="molecule type" value="mRNA"/>
</dbReference>
<dbReference type="SMR" id="U6BYK3"/>
<dbReference type="KEGG" id="ag:BAN57423"/>
<dbReference type="BioCyc" id="MetaCyc:MONOMER-124312"/>
<dbReference type="BRENDA" id="3.5.1.61">
    <property type="organism ID" value="3382"/>
</dbReference>
<dbReference type="GO" id="GO:0009507">
    <property type="term" value="C:chloroplast"/>
    <property type="evidence" value="ECO:0007669"/>
    <property type="project" value="UniProtKB-SubCell"/>
</dbReference>
<dbReference type="GO" id="GO:0047804">
    <property type="term" value="F:cysteine-S-conjugate beta-lyase activity"/>
    <property type="evidence" value="ECO:0000314"/>
    <property type="project" value="UniProtKB"/>
</dbReference>
<dbReference type="GO" id="GO:0030170">
    <property type="term" value="F:pyridoxal phosphate binding"/>
    <property type="evidence" value="ECO:0000314"/>
    <property type="project" value="UniProtKB"/>
</dbReference>
<dbReference type="GO" id="GO:0009086">
    <property type="term" value="P:methionine biosynthetic process"/>
    <property type="evidence" value="ECO:0007669"/>
    <property type="project" value="UniProtKB-KW"/>
</dbReference>
<dbReference type="GO" id="GO:0019346">
    <property type="term" value="P:transsulfuration"/>
    <property type="evidence" value="ECO:0007669"/>
    <property type="project" value="InterPro"/>
</dbReference>
<dbReference type="CDD" id="cd00614">
    <property type="entry name" value="CGS_like"/>
    <property type="match status" value="1"/>
</dbReference>
<dbReference type="FunFam" id="3.40.640.10:FF:000009">
    <property type="entry name" value="Cystathionine gamma-synthase homolog"/>
    <property type="match status" value="1"/>
</dbReference>
<dbReference type="Gene3D" id="3.90.1150.10">
    <property type="entry name" value="Aspartate Aminotransferase, domain 1"/>
    <property type="match status" value="1"/>
</dbReference>
<dbReference type="Gene3D" id="3.40.640.10">
    <property type="entry name" value="Type I PLP-dependent aspartate aminotransferase-like (Major domain)"/>
    <property type="match status" value="1"/>
</dbReference>
<dbReference type="InterPro" id="IPR000277">
    <property type="entry name" value="Cys/Met-Metab_PyrdxlP-dep_enz"/>
</dbReference>
<dbReference type="InterPro" id="IPR015424">
    <property type="entry name" value="PyrdxlP-dep_Trfase"/>
</dbReference>
<dbReference type="InterPro" id="IPR015421">
    <property type="entry name" value="PyrdxlP-dep_Trfase_major"/>
</dbReference>
<dbReference type="InterPro" id="IPR015422">
    <property type="entry name" value="PyrdxlP-dep_Trfase_small"/>
</dbReference>
<dbReference type="PANTHER" id="PTHR11808:SF50">
    <property type="entry name" value="CYSTATHIONINE BETA-LYASE"/>
    <property type="match status" value="1"/>
</dbReference>
<dbReference type="PANTHER" id="PTHR11808">
    <property type="entry name" value="TRANS-SULFURATION ENZYME FAMILY MEMBER"/>
    <property type="match status" value="1"/>
</dbReference>
<dbReference type="Pfam" id="PF01053">
    <property type="entry name" value="Cys_Met_Meta_PP"/>
    <property type="match status" value="1"/>
</dbReference>
<dbReference type="PIRSF" id="PIRSF001434">
    <property type="entry name" value="CGS"/>
    <property type="match status" value="1"/>
</dbReference>
<dbReference type="SUPFAM" id="SSF53383">
    <property type="entry name" value="PLP-dependent transferases"/>
    <property type="match status" value="1"/>
</dbReference>
<sequence length="442" mass="48092">MALPSAFLNPFVPSPVTANPRTKFARVGKGFNVSCLIKTEQTKSAVTETGVSPATKEVNEPSLSTVLVNYSADWDPYNATSTPIYQTATFKMKSATEFGEYYYSRNANPTRHTLEALLAQIDNAKFAYCFSSGMTALTSVCELVSPGDEIVTVEDIYGGSYNFINNLIGRKEGIVVKHVNTSDLDEVKRNMSNKTKLVWLESPSNPQLRVSDIRSIAKIAHAYGAILFIDNSVMSPVLSNPLDLGADIVMHSATKFIAGNSSCIGGSIATNNEELGNKIHSFQKATGCALSPKDSWICLEGIKTMALRVQEKQRNAQLIAEFLASHPKVTEISYPGLQSDPGYELHNSQSKGPGSVISFKTGSLPLSKQIVEDTKYFSMTVSFGGVGSCICLPWYTSHSSIPDSQKLKVGLTRDLVRLSVGIEDVEDLVMDLQNVLSIQPQF</sequence>
<organism>
    <name type="scientific">Mimosa pudica</name>
    <name type="common">Sensitive plant</name>
    <dbReference type="NCBI Taxonomy" id="76306"/>
    <lineage>
        <taxon>Eukaryota</taxon>
        <taxon>Viridiplantae</taxon>
        <taxon>Streptophyta</taxon>
        <taxon>Embryophyta</taxon>
        <taxon>Tracheophyta</taxon>
        <taxon>Spermatophyta</taxon>
        <taxon>Magnoliopsida</taxon>
        <taxon>eudicotyledons</taxon>
        <taxon>Gunneridae</taxon>
        <taxon>Pentapetalae</taxon>
        <taxon>rosids</taxon>
        <taxon>fabids</taxon>
        <taxon>Fabales</taxon>
        <taxon>Fabaceae</taxon>
        <taxon>Caesalpinioideae</taxon>
        <taxon>mimosoid clade</taxon>
        <taxon>Mimoseae</taxon>
        <taxon>Mimosa</taxon>
    </lineage>
</organism>
<feature type="transit peptide" description="Chloroplast" evidence="2">
    <location>
        <begin position="1"/>
        <end position="35"/>
    </location>
</feature>
<feature type="chain" id="PRO_0000460739" description="Mimosinase, chloroplastic">
    <location>
        <begin position="36"/>
        <end position="442"/>
    </location>
</feature>
<feature type="binding site" evidence="1">
    <location>
        <position position="103"/>
    </location>
    <ligand>
        <name>pyridoxal 5'-phosphate</name>
        <dbReference type="ChEBI" id="CHEBI:597326"/>
    </ligand>
</feature>
<feature type="binding site" evidence="1">
    <location>
        <position position="105"/>
    </location>
    <ligand>
        <name>pyridoxal 5'-phosphate</name>
        <dbReference type="ChEBI" id="CHEBI:597326"/>
    </ligand>
</feature>
<feature type="binding site" evidence="1">
    <location>
        <position position="133"/>
    </location>
    <ligand>
        <name>pyridoxal 5'-phosphate</name>
        <dbReference type="ChEBI" id="CHEBI:597326"/>
    </ligand>
</feature>
<feature type="binding site" evidence="1">
    <location>
        <position position="134"/>
    </location>
    <ligand>
        <name>pyridoxal 5'-phosphate</name>
        <dbReference type="ChEBI" id="CHEBI:597326"/>
    </ligand>
</feature>
<feature type="binding site" evidence="1">
    <location>
        <position position="252"/>
    </location>
    <ligand>
        <name>pyridoxal 5'-phosphate</name>
        <dbReference type="ChEBI" id="CHEBI:597326"/>
    </ligand>
</feature>
<feature type="binding site" evidence="1">
    <location>
        <position position="254"/>
    </location>
    <ligand>
        <name>pyridoxal 5'-phosphate</name>
        <dbReference type="ChEBI" id="CHEBI:597326"/>
    </ligand>
</feature>
<feature type="modified residue" description="N6-(pyridoxal phosphate)lysine" evidence="1">
    <location>
        <position position="255"/>
    </location>
</feature>
<feature type="mutagenesis site" description="Reduces catalytic efficiency 6-fold and 4-fold for mimosine and cystathionine, respectively." evidence="3">
    <original>F</original>
    <variation>N</variation>
    <location>
        <position position="98"/>
    </location>
</feature>
<feature type="mutagenesis site" description="Reduces catalytic efficiency 10-fold for both mimosine and cystathionine." evidence="3">
    <original>Y</original>
    <variation>E</variation>
    <location>
        <position position="102"/>
    </location>
</feature>
<feature type="mutagenesis site" description="Reduces catalytic efficiency 6-fold for mimosine, but has no effect on cystathionine catalytic efficiency." evidence="3">
    <original>Y</original>
    <variation>F</variation>
    <location>
        <position position="102"/>
    </location>
</feature>
<feature type="mutagenesis site" description="Reduces catalytic efficiency 1.5-fold for both mimosine and cystathionine." evidence="3">
    <original>N</original>
    <variation>R</variation>
    <location>
        <position position="162"/>
    </location>
</feature>
<feature type="mutagenesis site" description="Reduces catalytic efficiency 3-fold and 1.2-fold for mimosine and cystathionine, respectively. Reduces catalytic efficiency 1.2-fold and 2-fold for mimosine and cystathionine, respectively; when associated with C-295." evidence="3">
    <original>C</original>
    <variation>I</variation>
    <location>
        <position position="263"/>
    </location>
</feature>
<feature type="mutagenesis site" description="Reduces catalytic efficiency 4-fold for both mimosine and cystathionine." evidence="3">
    <original>K</original>
    <variation>N</variation>
    <location>
        <position position="284"/>
    </location>
</feature>
<feature type="mutagenesis site" description="Increases catalytic efficiency 1.8-fold for cystathionine, but has no effect on mimosine catalytic efficiency." evidence="3">
    <original>C</original>
    <variation>S</variation>
    <location>
        <position position="288"/>
    </location>
</feature>
<feature type="mutagenesis site" description="Reduces catalytic efficiency 1.2-fold and 2-fold for mimosine and cystathionine, respectively; when associated with I-263." evidence="3">
    <original>S</original>
    <variation>C</variation>
    <location>
        <position position="295"/>
    </location>
</feature>
<accession>U6BYK3</accession>
<keyword id="KW-0028">Amino-acid biosynthesis</keyword>
<keyword id="KW-0150">Chloroplast</keyword>
<keyword id="KW-0456">Lyase</keyword>
<keyword id="KW-0486">Methionine biosynthesis</keyword>
<keyword id="KW-0934">Plastid</keyword>
<keyword id="KW-0663">Pyridoxal phosphate</keyword>
<keyword id="KW-0809">Transit peptide</keyword>